<name>RS4_NITMU</name>
<feature type="chain" id="PRO_0000228907" description="Small ribosomal subunit protein uS4">
    <location>
        <begin position="1"/>
        <end position="208"/>
    </location>
</feature>
<feature type="domain" description="S4 RNA-binding" evidence="1">
    <location>
        <begin position="98"/>
        <end position="158"/>
    </location>
</feature>
<organism>
    <name type="scientific">Nitrosospira multiformis (strain ATCC 25196 / NCIMB 11849 / C 71)</name>
    <dbReference type="NCBI Taxonomy" id="323848"/>
    <lineage>
        <taxon>Bacteria</taxon>
        <taxon>Pseudomonadati</taxon>
        <taxon>Pseudomonadota</taxon>
        <taxon>Betaproteobacteria</taxon>
        <taxon>Nitrosomonadales</taxon>
        <taxon>Nitrosomonadaceae</taxon>
        <taxon>Nitrosospira</taxon>
    </lineage>
</organism>
<accession>Q2YAX3</accession>
<protein>
    <recommendedName>
        <fullName evidence="1">Small ribosomal subunit protein uS4</fullName>
    </recommendedName>
    <alternativeName>
        <fullName evidence="2">30S ribosomal protein S4</fullName>
    </alternativeName>
</protein>
<reference key="1">
    <citation type="submission" date="2005-08" db="EMBL/GenBank/DDBJ databases">
        <title>Complete sequence of chromosome 1 of Nitrosospira multiformis ATCC 25196.</title>
        <authorList>
            <person name="Copeland A."/>
            <person name="Lucas S."/>
            <person name="Lapidus A."/>
            <person name="Barry K."/>
            <person name="Detter J.C."/>
            <person name="Glavina T."/>
            <person name="Hammon N."/>
            <person name="Israni S."/>
            <person name="Pitluck S."/>
            <person name="Chain P."/>
            <person name="Malfatti S."/>
            <person name="Shin M."/>
            <person name="Vergez L."/>
            <person name="Schmutz J."/>
            <person name="Larimer F."/>
            <person name="Land M."/>
            <person name="Hauser L."/>
            <person name="Kyrpides N."/>
            <person name="Lykidis A."/>
            <person name="Richardson P."/>
        </authorList>
    </citation>
    <scope>NUCLEOTIDE SEQUENCE [LARGE SCALE GENOMIC DNA]</scope>
    <source>
        <strain>ATCC 25196 / NCIMB 11849 / C 71</strain>
    </source>
</reference>
<proteinExistence type="inferred from homology"/>
<comment type="function">
    <text evidence="1">One of the primary rRNA binding proteins, it binds directly to 16S rRNA where it nucleates assembly of the body of the 30S subunit.</text>
</comment>
<comment type="function">
    <text evidence="1">With S5 and S12 plays an important role in translational accuracy.</text>
</comment>
<comment type="subunit">
    <text evidence="1">Part of the 30S ribosomal subunit. Contacts protein S5. The interaction surface between S4 and S5 is involved in control of translational fidelity.</text>
</comment>
<comment type="similarity">
    <text evidence="1">Belongs to the universal ribosomal protein uS4 family.</text>
</comment>
<dbReference type="EMBL" id="CP000103">
    <property type="protein sequence ID" value="ABB74098.1"/>
    <property type="molecule type" value="Genomic_DNA"/>
</dbReference>
<dbReference type="RefSeq" id="WP_011380147.1">
    <property type="nucleotide sequence ID" value="NC_007614.1"/>
</dbReference>
<dbReference type="SMR" id="Q2YAX3"/>
<dbReference type="STRING" id="323848.Nmul_A0791"/>
<dbReference type="KEGG" id="nmu:Nmul_A0791"/>
<dbReference type="eggNOG" id="COG0522">
    <property type="taxonomic scope" value="Bacteria"/>
</dbReference>
<dbReference type="HOGENOM" id="CLU_092403_0_2_4"/>
<dbReference type="OrthoDB" id="9803672at2"/>
<dbReference type="Proteomes" id="UP000002718">
    <property type="component" value="Chromosome"/>
</dbReference>
<dbReference type="GO" id="GO:0015935">
    <property type="term" value="C:small ribosomal subunit"/>
    <property type="evidence" value="ECO:0007669"/>
    <property type="project" value="InterPro"/>
</dbReference>
<dbReference type="GO" id="GO:0019843">
    <property type="term" value="F:rRNA binding"/>
    <property type="evidence" value="ECO:0007669"/>
    <property type="project" value="UniProtKB-UniRule"/>
</dbReference>
<dbReference type="GO" id="GO:0003735">
    <property type="term" value="F:structural constituent of ribosome"/>
    <property type="evidence" value="ECO:0007669"/>
    <property type="project" value="InterPro"/>
</dbReference>
<dbReference type="GO" id="GO:0042274">
    <property type="term" value="P:ribosomal small subunit biogenesis"/>
    <property type="evidence" value="ECO:0007669"/>
    <property type="project" value="TreeGrafter"/>
</dbReference>
<dbReference type="GO" id="GO:0006412">
    <property type="term" value="P:translation"/>
    <property type="evidence" value="ECO:0007669"/>
    <property type="project" value="UniProtKB-UniRule"/>
</dbReference>
<dbReference type="CDD" id="cd00165">
    <property type="entry name" value="S4"/>
    <property type="match status" value="1"/>
</dbReference>
<dbReference type="FunFam" id="1.10.1050.10:FF:000001">
    <property type="entry name" value="30S ribosomal protein S4"/>
    <property type="match status" value="1"/>
</dbReference>
<dbReference type="FunFam" id="3.10.290.10:FF:000001">
    <property type="entry name" value="30S ribosomal protein S4"/>
    <property type="match status" value="1"/>
</dbReference>
<dbReference type="Gene3D" id="1.10.1050.10">
    <property type="entry name" value="Ribosomal Protein S4 Delta 41, Chain A, domain 1"/>
    <property type="match status" value="1"/>
</dbReference>
<dbReference type="Gene3D" id="3.10.290.10">
    <property type="entry name" value="RNA-binding S4 domain"/>
    <property type="match status" value="1"/>
</dbReference>
<dbReference type="HAMAP" id="MF_01306_B">
    <property type="entry name" value="Ribosomal_uS4_B"/>
    <property type="match status" value="1"/>
</dbReference>
<dbReference type="InterPro" id="IPR022801">
    <property type="entry name" value="Ribosomal_uS4"/>
</dbReference>
<dbReference type="InterPro" id="IPR005709">
    <property type="entry name" value="Ribosomal_uS4_bac-type"/>
</dbReference>
<dbReference type="InterPro" id="IPR001912">
    <property type="entry name" value="Ribosomal_uS4_N"/>
</dbReference>
<dbReference type="InterPro" id="IPR002942">
    <property type="entry name" value="S4_RNA-bd"/>
</dbReference>
<dbReference type="InterPro" id="IPR036986">
    <property type="entry name" value="S4_RNA-bd_sf"/>
</dbReference>
<dbReference type="NCBIfam" id="NF003717">
    <property type="entry name" value="PRK05327.1"/>
    <property type="match status" value="1"/>
</dbReference>
<dbReference type="NCBIfam" id="TIGR01017">
    <property type="entry name" value="rpsD_bact"/>
    <property type="match status" value="1"/>
</dbReference>
<dbReference type="PANTHER" id="PTHR11831">
    <property type="entry name" value="30S 40S RIBOSOMAL PROTEIN"/>
    <property type="match status" value="1"/>
</dbReference>
<dbReference type="PANTHER" id="PTHR11831:SF4">
    <property type="entry name" value="SMALL RIBOSOMAL SUBUNIT PROTEIN US4M"/>
    <property type="match status" value="1"/>
</dbReference>
<dbReference type="Pfam" id="PF00163">
    <property type="entry name" value="Ribosomal_S4"/>
    <property type="match status" value="1"/>
</dbReference>
<dbReference type="Pfam" id="PF01479">
    <property type="entry name" value="S4"/>
    <property type="match status" value="1"/>
</dbReference>
<dbReference type="SMART" id="SM01390">
    <property type="entry name" value="Ribosomal_S4"/>
    <property type="match status" value="1"/>
</dbReference>
<dbReference type="SMART" id="SM00363">
    <property type="entry name" value="S4"/>
    <property type="match status" value="1"/>
</dbReference>
<dbReference type="SUPFAM" id="SSF55174">
    <property type="entry name" value="Alpha-L RNA-binding motif"/>
    <property type="match status" value="1"/>
</dbReference>
<dbReference type="PROSITE" id="PS50889">
    <property type="entry name" value="S4"/>
    <property type="match status" value="1"/>
</dbReference>
<sequence>MARNLDPKCRQCRREGEKLFLKGEKCFTDKCAIERRNYAPGQHGQKSGRLSDYGVQLREKQKLRRIYGVLERQFRNGYELAERQRGVTGENLLQLLECRLDTVSYRMGFGASRSEARQIVRHNGILVNGRRINIPSYQVKPGDVIEVAEKAKNHLRIKASVEAAEQRHFPEWLEVDTKAMKGTFKNKPERSDLPSSINESLVIELYSK</sequence>
<keyword id="KW-1185">Reference proteome</keyword>
<keyword id="KW-0687">Ribonucleoprotein</keyword>
<keyword id="KW-0689">Ribosomal protein</keyword>
<keyword id="KW-0694">RNA-binding</keyword>
<keyword id="KW-0699">rRNA-binding</keyword>
<gene>
    <name evidence="1" type="primary">rpsD</name>
    <name type="ordered locus">Nmul_A0791</name>
</gene>
<evidence type="ECO:0000255" key="1">
    <source>
        <dbReference type="HAMAP-Rule" id="MF_01306"/>
    </source>
</evidence>
<evidence type="ECO:0000305" key="2"/>